<proteinExistence type="inferred from homology"/>
<name>MAFA1_NEIG1</name>
<feature type="signal peptide" evidence="1">
    <location>
        <begin position="1"/>
        <end position="18"/>
    </location>
</feature>
<feature type="chain" id="PRO_0000344483" description="Adhesin MafA 1/4">
    <location>
        <begin position="19"/>
        <end position="320"/>
    </location>
</feature>
<feature type="region of interest" description="Disordered" evidence="2">
    <location>
        <begin position="287"/>
        <end position="320"/>
    </location>
</feature>
<feature type="lipid moiety-binding region" description="N-palmitoyl cysteine" evidence="1">
    <location>
        <position position="19"/>
    </location>
</feature>
<feature type="lipid moiety-binding region" description="S-diacylglycerol cysteine" evidence="1">
    <location>
        <position position="19"/>
    </location>
</feature>
<keyword id="KW-0130">Cell adhesion</keyword>
<keyword id="KW-0998">Cell outer membrane</keyword>
<keyword id="KW-0449">Lipoprotein</keyword>
<keyword id="KW-0472">Membrane</keyword>
<keyword id="KW-0564">Palmitate</keyword>
<keyword id="KW-1185">Reference proteome</keyword>
<keyword id="KW-0732">Signal</keyword>
<keyword id="KW-0843">Virulence</keyword>
<gene>
    <name type="primary">mafA1</name>
    <name type="ordered locus">NGO_1067</name>
</gene>
<gene>
    <name type="primary">mafA4</name>
    <name type="ordered locus">NGO_1972</name>
</gene>
<comment type="subcellular location">
    <subcellularLocation>
        <location evidence="3">Cell outer membrane</location>
        <topology evidence="1">Lipid-anchor</topology>
    </subcellularLocation>
</comment>
<comment type="similarity">
    <text evidence="3">Belongs to the MafA family.</text>
</comment>
<organism>
    <name type="scientific">Neisseria gonorrhoeae (strain ATCC 700825 / FA 1090)</name>
    <dbReference type="NCBI Taxonomy" id="242231"/>
    <lineage>
        <taxon>Bacteria</taxon>
        <taxon>Pseudomonadati</taxon>
        <taxon>Pseudomonadota</taxon>
        <taxon>Betaproteobacteria</taxon>
        <taxon>Neisseriales</taxon>
        <taxon>Neisseriaceae</taxon>
        <taxon>Neisseria</taxon>
    </lineage>
</organism>
<protein>
    <recommendedName>
        <fullName>Adhesin MafA 1/4</fullName>
    </recommendedName>
</protein>
<dbReference type="EMBL" id="AE004969">
    <property type="protein sequence ID" value="AAW89737.1"/>
    <property type="molecule type" value="Genomic_DNA"/>
</dbReference>
<dbReference type="EMBL" id="AE004969">
    <property type="protein sequence ID" value="AAW90581.1"/>
    <property type="molecule type" value="Genomic_DNA"/>
</dbReference>
<dbReference type="RefSeq" id="WP_010951170.1">
    <property type="nucleotide sequence ID" value="NC_002946.2"/>
</dbReference>
<dbReference type="RefSeq" id="YP_208149.1">
    <property type="nucleotide sequence ID" value="NC_002946.2"/>
</dbReference>
<dbReference type="RefSeq" id="YP_208993.1">
    <property type="nucleotide sequence ID" value="NC_002946.2"/>
</dbReference>
<dbReference type="STRING" id="242231.NGO_1067"/>
<dbReference type="KEGG" id="ngo:NGO_1067"/>
<dbReference type="KEGG" id="ngo:NGO_1972"/>
<dbReference type="PATRIC" id="fig|242231.10.peg.1250"/>
<dbReference type="HOGENOM" id="CLU_985210_0_0_4"/>
<dbReference type="Proteomes" id="UP000000535">
    <property type="component" value="Chromosome"/>
</dbReference>
<dbReference type="GO" id="GO:0009279">
    <property type="term" value="C:cell outer membrane"/>
    <property type="evidence" value="ECO:0007669"/>
    <property type="project" value="UniProtKB-SubCell"/>
</dbReference>
<dbReference type="GO" id="GO:0007155">
    <property type="term" value="P:cell adhesion"/>
    <property type="evidence" value="ECO:0007669"/>
    <property type="project" value="UniProtKB-KW"/>
</dbReference>
<dbReference type="PROSITE" id="PS51257">
    <property type="entry name" value="PROKAR_LIPOPROTEIN"/>
    <property type="match status" value="1"/>
</dbReference>
<sequence>MRARLLIPILFSVFILSACGTLTGIPSHGGGKRFAVEQELVAASARAAVKDMDLQALHGRKVALYIATMGDQGSGSLTGGRYSIDALIRGEYINSPAVRTDYTYPRYETTAETTSGGLTGLTTSLSTLNAPALSRTQSDGSGSRSSLGLNIGGMGDYRNETLTTNPRDTAFLSHLVQTVFFLRGIDVVSPANADTDVFINIDVFGTIRNRTEMHLYNAETLKAQTKLEYFAVDRTNKKLLIKPKTNAFEAAYKENYALWMGPYKVSKGIKPTEGLMVDFSDIQPYGNHTGNSAPSVEADNSHEGYGYSDEAVRQHRQGQP</sequence>
<accession>Q5F5F6</accession>
<evidence type="ECO:0000255" key="1">
    <source>
        <dbReference type="PROSITE-ProRule" id="PRU00303"/>
    </source>
</evidence>
<evidence type="ECO:0000256" key="2">
    <source>
        <dbReference type="SAM" id="MobiDB-lite"/>
    </source>
</evidence>
<evidence type="ECO:0000305" key="3"/>
<reference key="1">
    <citation type="submission" date="2003-03" db="EMBL/GenBank/DDBJ databases">
        <title>The complete genome sequence of Neisseria gonorrhoeae.</title>
        <authorList>
            <person name="Lewis L.A."/>
            <person name="Gillaspy A.F."/>
            <person name="McLaughlin R.E."/>
            <person name="Gipson M."/>
            <person name="Ducey T.F."/>
            <person name="Ownbey T."/>
            <person name="Hartman K."/>
            <person name="Nydick C."/>
            <person name="Carson M.B."/>
            <person name="Vaughn J."/>
            <person name="Thomson C."/>
            <person name="Song L."/>
            <person name="Lin S."/>
            <person name="Yuan X."/>
            <person name="Najar F."/>
            <person name="Zhan M."/>
            <person name="Ren Q."/>
            <person name="Zhu H."/>
            <person name="Qi S."/>
            <person name="Kenton S.M."/>
            <person name="Lai H."/>
            <person name="White J.D."/>
            <person name="Clifton S."/>
            <person name="Roe B.A."/>
            <person name="Dyer D.W."/>
        </authorList>
    </citation>
    <scope>NUCLEOTIDE SEQUENCE [LARGE SCALE GENOMIC DNA]</scope>
    <source>
        <strain>ATCC 700825 / FA 1090</strain>
    </source>
</reference>